<comment type="function">
    <text evidence="1">Negatively regulates transcription of bacterial ribonucleotide reductase nrd genes and operons by binding to NrdR-boxes.</text>
</comment>
<comment type="cofactor">
    <cofactor evidence="1">
        <name>Zn(2+)</name>
        <dbReference type="ChEBI" id="CHEBI:29105"/>
    </cofactor>
    <text evidence="1">Binds 1 zinc ion.</text>
</comment>
<comment type="similarity">
    <text evidence="1">Belongs to the NrdR family.</text>
</comment>
<protein>
    <recommendedName>
        <fullName evidence="1">Transcriptional repressor NrdR</fullName>
    </recommendedName>
</protein>
<evidence type="ECO:0000255" key="1">
    <source>
        <dbReference type="HAMAP-Rule" id="MF_00440"/>
    </source>
</evidence>
<keyword id="KW-0067">ATP-binding</keyword>
<keyword id="KW-0238">DNA-binding</keyword>
<keyword id="KW-0479">Metal-binding</keyword>
<keyword id="KW-0547">Nucleotide-binding</keyword>
<keyword id="KW-1185">Reference proteome</keyword>
<keyword id="KW-0678">Repressor</keyword>
<keyword id="KW-0804">Transcription</keyword>
<keyword id="KW-0805">Transcription regulation</keyword>
<keyword id="KW-0862">Zinc</keyword>
<keyword id="KW-0863">Zinc-finger</keyword>
<name>NRDR_BRUC2</name>
<gene>
    <name evidence="1" type="primary">nrdR</name>
    <name type="ordered locus">BCAN_A0779</name>
</gene>
<organism>
    <name type="scientific">Brucella canis (strain ATCC 23365 / NCTC 10854 / RM-666)</name>
    <dbReference type="NCBI Taxonomy" id="483179"/>
    <lineage>
        <taxon>Bacteria</taxon>
        <taxon>Pseudomonadati</taxon>
        <taxon>Pseudomonadota</taxon>
        <taxon>Alphaproteobacteria</taxon>
        <taxon>Hyphomicrobiales</taxon>
        <taxon>Brucellaceae</taxon>
        <taxon>Brucella/Ochrobactrum group</taxon>
        <taxon>Brucella</taxon>
    </lineage>
</organism>
<reference key="1">
    <citation type="submission" date="2007-10" db="EMBL/GenBank/DDBJ databases">
        <title>Brucella canis ATCC 23365 whole genome shotgun sequencing project.</title>
        <authorList>
            <person name="Setubal J.C."/>
            <person name="Bowns C."/>
            <person name="Boyle S."/>
            <person name="Crasta O.R."/>
            <person name="Czar M.J."/>
            <person name="Dharmanolla C."/>
            <person name="Gillespie J.J."/>
            <person name="Kenyon R.W."/>
            <person name="Lu J."/>
            <person name="Mane S."/>
            <person name="Mohapatra S."/>
            <person name="Nagrani S."/>
            <person name="Purkayastha A."/>
            <person name="Rajasimha H.K."/>
            <person name="Shallom J.M."/>
            <person name="Shallom S."/>
            <person name="Shukla M."/>
            <person name="Snyder E.E."/>
            <person name="Sobral B.W."/>
            <person name="Wattam A.R."/>
            <person name="Will R."/>
            <person name="Williams K."/>
            <person name="Yoo H."/>
            <person name="Bruce D."/>
            <person name="Detter C."/>
            <person name="Munk C."/>
            <person name="Brettin T.S."/>
        </authorList>
    </citation>
    <scope>NUCLEOTIDE SEQUENCE [LARGE SCALE GENOMIC DNA]</scope>
    <source>
        <strain>ATCC 23365 / NCTC 10854 / RM-666</strain>
    </source>
</reference>
<sequence>MRCPYCQSEDTQVKDSRPAEDGAVIRRRRVCSVCGGRFTTFERVQLRDLMVVKKSGRRVPFDRDKLTRSIEVALRKRDVDSERVERAISGIVRQLESAGEAEVTSDEIGRLAMDALKGIDDIAYIRFASVYRNFSKAVDFHNVIDELTVSETGDNLET</sequence>
<proteinExistence type="inferred from homology"/>
<accession>A9MAE6</accession>
<feature type="chain" id="PRO_1000080717" description="Transcriptional repressor NrdR">
    <location>
        <begin position="1"/>
        <end position="158"/>
    </location>
</feature>
<feature type="domain" description="ATP-cone" evidence="1">
    <location>
        <begin position="49"/>
        <end position="139"/>
    </location>
</feature>
<feature type="zinc finger region" evidence="1">
    <location>
        <begin position="3"/>
        <end position="34"/>
    </location>
</feature>
<dbReference type="EMBL" id="CP000872">
    <property type="protein sequence ID" value="ABX61849.1"/>
    <property type="molecule type" value="Genomic_DNA"/>
</dbReference>
<dbReference type="RefSeq" id="WP_002966765.1">
    <property type="nucleotide sequence ID" value="NC_010103.1"/>
</dbReference>
<dbReference type="SMR" id="A9MAE6"/>
<dbReference type="GeneID" id="93016844"/>
<dbReference type="KEGG" id="bcs:BCAN_A0779"/>
<dbReference type="HOGENOM" id="CLU_108412_0_1_5"/>
<dbReference type="Proteomes" id="UP000001385">
    <property type="component" value="Chromosome I"/>
</dbReference>
<dbReference type="GO" id="GO:0005524">
    <property type="term" value="F:ATP binding"/>
    <property type="evidence" value="ECO:0007669"/>
    <property type="project" value="UniProtKB-KW"/>
</dbReference>
<dbReference type="GO" id="GO:0003677">
    <property type="term" value="F:DNA binding"/>
    <property type="evidence" value="ECO:0007669"/>
    <property type="project" value="UniProtKB-KW"/>
</dbReference>
<dbReference type="GO" id="GO:0008270">
    <property type="term" value="F:zinc ion binding"/>
    <property type="evidence" value="ECO:0007669"/>
    <property type="project" value="UniProtKB-UniRule"/>
</dbReference>
<dbReference type="GO" id="GO:0045892">
    <property type="term" value="P:negative regulation of DNA-templated transcription"/>
    <property type="evidence" value="ECO:0007669"/>
    <property type="project" value="UniProtKB-UniRule"/>
</dbReference>
<dbReference type="HAMAP" id="MF_00440">
    <property type="entry name" value="NrdR"/>
    <property type="match status" value="1"/>
</dbReference>
<dbReference type="InterPro" id="IPR005144">
    <property type="entry name" value="ATP-cone_dom"/>
</dbReference>
<dbReference type="InterPro" id="IPR055173">
    <property type="entry name" value="NrdR-like_N"/>
</dbReference>
<dbReference type="InterPro" id="IPR003796">
    <property type="entry name" value="RNR_NrdR-like"/>
</dbReference>
<dbReference type="NCBIfam" id="TIGR00244">
    <property type="entry name" value="transcriptional regulator NrdR"/>
    <property type="match status" value="1"/>
</dbReference>
<dbReference type="PANTHER" id="PTHR30455">
    <property type="entry name" value="TRANSCRIPTIONAL REPRESSOR NRDR"/>
    <property type="match status" value="1"/>
</dbReference>
<dbReference type="PANTHER" id="PTHR30455:SF2">
    <property type="entry name" value="TRANSCRIPTIONAL REPRESSOR NRDR"/>
    <property type="match status" value="1"/>
</dbReference>
<dbReference type="Pfam" id="PF03477">
    <property type="entry name" value="ATP-cone"/>
    <property type="match status" value="1"/>
</dbReference>
<dbReference type="Pfam" id="PF22811">
    <property type="entry name" value="Zn_ribbon_NrdR"/>
    <property type="match status" value="1"/>
</dbReference>
<dbReference type="PROSITE" id="PS51161">
    <property type="entry name" value="ATP_CONE"/>
    <property type="match status" value="1"/>
</dbReference>